<keyword id="KW-0020">Allergen</keyword>
<keyword id="KW-0903">Direct protein sequencing</keyword>
<protein>
    <recommendedName>
        <fullName evidence="2">Allergen Lip b 1</fullName>
    </recommendedName>
    <allergenName>Lip b 1</allergenName>
</protein>
<dbReference type="Allergome" id="9049">
    <property type="allergen name" value="Lip b 1"/>
</dbReference>
<dbReference type="Allergome" id="9050">
    <property type="allergen name" value="Lip b 1.0101"/>
</dbReference>
<evidence type="ECO:0000269" key="1">
    <source>
    </source>
</evidence>
<evidence type="ECO:0000303" key="2">
    <source>
    </source>
</evidence>
<evidence type="ECO:0000305" key="3"/>
<accession>P86712</accession>
<proteinExistence type="evidence at protein level"/>
<organism>
    <name type="scientific">Liposcelis bostrychophila</name>
    <name type="common">Booklouse</name>
    <dbReference type="NCBI Taxonomy" id="185214"/>
    <lineage>
        <taxon>Eukaryota</taxon>
        <taxon>Metazoa</taxon>
        <taxon>Ecdysozoa</taxon>
        <taxon>Arthropoda</taxon>
        <taxon>Hexapoda</taxon>
        <taxon>Insecta</taxon>
        <taxon>Pterygota</taxon>
        <taxon>Neoptera</taxon>
        <taxon>Paraneoptera</taxon>
        <taxon>Psocodea</taxon>
        <taxon>Psocoptera</taxon>
        <taxon>Troctomorpha</taxon>
        <taxon>Nanopsocetae</taxon>
        <taxon>Liposcelididae</taxon>
        <taxon>Liposcelis</taxon>
    </lineage>
</organism>
<name>ALL1_LIPBO</name>
<reference evidence="3" key="1">
    <citation type="journal article" date="2012" name="Int. Arch. Allergy Immunol.">
        <title>Allergenicity and cross-reactivity of booklice (Liposcelis bostrichophila): A common household insect pest in Japan.</title>
        <authorList>
            <person name="Fukutomi Y."/>
            <person name="Kawakami Y."/>
            <person name="Taniguchi M."/>
            <person name="Saito A."/>
            <person name="Fukuda A."/>
            <person name="Yasueda H."/>
            <person name="Nakazawa T."/>
            <person name="Hasegawa M."/>
            <person name="Nakamura H."/>
            <person name="Akiyama K."/>
        </authorList>
    </citation>
    <scope>PROTEIN SEQUENCE</scope>
    <scope>ALLERGENICITY</scope>
</reference>
<feature type="chain" id="PRO_0000415394" description="Allergen Lip b 1">
    <location>
        <begin position="1" status="less than"/>
        <end position="24" status="greater than"/>
    </location>
</feature>
<feature type="non-consecutive residues" evidence="2">
    <location>
        <begin position="12"/>
        <end position="13"/>
    </location>
</feature>
<feature type="non-terminal residue" evidence="2">
    <location>
        <position position="1"/>
    </location>
</feature>
<feature type="non-terminal residue" evidence="2">
    <location>
        <position position="24"/>
    </location>
</feature>
<sequence length="24" mass="2447">AVLDTALSGIDKVLHGSIDAHKAD</sequence>
<comment type="allergen">
    <text evidence="1">Causes an allergic reaction in human. Binds to IgE.</text>
</comment>
<comment type="miscellaneous">
    <text evidence="1">On the 2D-gel the determined pI of this protein is: 3.5, its MW is: 26 kDa.</text>
</comment>
<comment type="caution">
    <text evidence="1">The order of the peptides shown is unknown.</text>
</comment>